<proteinExistence type="inferred from homology"/>
<gene>
    <name evidence="1" type="primary">ackA</name>
    <name type="ordered locus">Sca_1316</name>
</gene>
<dbReference type="EC" id="2.7.2.1" evidence="1"/>
<dbReference type="EMBL" id="AM295250">
    <property type="protein sequence ID" value="CAL28221.1"/>
    <property type="molecule type" value="Genomic_DNA"/>
</dbReference>
<dbReference type="RefSeq" id="WP_015900561.1">
    <property type="nucleotide sequence ID" value="NC_012121.1"/>
</dbReference>
<dbReference type="SMR" id="B9DN93"/>
<dbReference type="GeneID" id="93793738"/>
<dbReference type="KEGG" id="sca:SCA_1316"/>
<dbReference type="eggNOG" id="COG0282">
    <property type="taxonomic scope" value="Bacteria"/>
</dbReference>
<dbReference type="HOGENOM" id="CLU_020352_0_1_9"/>
<dbReference type="OrthoDB" id="9802453at2"/>
<dbReference type="BioCyc" id="SCAR396513:SCA_RS06555-MONOMER"/>
<dbReference type="UniPathway" id="UPA00340">
    <property type="reaction ID" value="UER00458"/>
</dbReference>
<dbReference type="Proteomes" id="UP000000444">
    <property type="component" value="Chromosome"/>
</dbReference>
<dbReference type="GO" id="GO:0005737">
    <property type="term" value="C:cytoplasm"/>
    <property type="evidence" value="ECO:0007669"/>
    <property type="project" value="UniProtKB-SubCell"/>
</dbReference>
<dbReference type="GO" id="GO:0008776">
    <property type="term" value="F:acetate kinase activity"/>
    <property type="evidence" value="ECO:0007669"/>
    <property type="project" value="UniProtKB-UniRule"/>
</dbReference>
<dbReference type="GO" id="GO:0005524">
    <property type="term" value="F:ATP binding"/>
    <property type="evidence" value="ECO:0007669"/>
    <property type="project" value="UniProtKB-KW"/>
</dbReference>
<dbReference type="GO" id="GO:0000287">
    <property type="term" value="F:magnesium ion binding"/>
    <property type="evidence" value="ECO:0007669"/>
    <property type="project" value="UniProtKB-UniRule"/>
</dbReference>
<dbReference type="GO" id="GO:0006083">
    <property type="term" value="P:acetate metabolic process"/>
    <property type="evidence" value="ECO:0007669"/>
    <property type="project" value="TreeGrafter"/>
</dbReference>
<dbReference type="GO" id="GO:0006085">
    <property type="term" value="P:acetyl-CoA biosynthetic process"/>
    <property type="evidence" value="ECO:0007669"/>
    <property type="project" value="UniProtKB-UniRule"/>
</dbReference>
<dbReference type="CDD" id="cd24010">
    <property type="entry name" value="ASKHA_NBD_AcK_PK"/>
    <property type="match status" value="1"/>
</dbReference>
<dbReference type="Gene3D" id="3.30.420.40">
    <property type="match status" value="2"/>
</dbReference>
<dbReference type="HAMAP" id="MF_00020">
    <property type="entry name" value="Acetate_kinase"/>
    <property type="match status" value="1"/>
</dbReference>
<dbReference type="InterPro" id="IPR004372">
    <property type="entry name" value="Ac/propionate_kinase"/>
</dbReference>
<dbReference type="InterPro" id="IPR000890">
    <property type="entry name" value="Aliphatic_acid_kin_short-chain"/>
</dbReference>
<dbReference type="InterPro" id="IPR023865">
    <property type="entry name" value="Aliphatic_acid_kinase_CS"/>
</dbReference>
<dbReference type="InterPro" id="IPR043129">
    <property type="entry name" value="ATPase_NBD"/>
</dbReference>
<dbReference type="NCBIfam" id="TIGR00016">
    <property type="entry name" value="ackA"/>
    <property type="match status" value="1"/>
</dbReference>
<dbReference type="PANTHER" id="PTHR21060">
    <property type="entry name" value="ACETATE KINASE"/>
    <property type="match status" value="1"/>
</dbReference>
<dbReference type="PANTHER" id="PTHR21060:SF15">
    <property type="entry name" value="ACETATE KINASE-RELATED"/>
    <property type="match status" value="1"/>
</dbReference>
<dbReference type="Pfam" id="PF00871">
    <property type="entry name" value="Acetate_kinase"/>
    <property type="match status" value="1"/>
</dbReference>
<dbReference type="PIRSF" id="PIRSF000722">
    <property type="entry name" value="Acetate_prop_kin"/>
    <property type="match status" value="1"/>
</dbReference>
<dbReference type="PRINTS" id="PR00471">
    <property type="entry name" value="ACETATEKNASE"/>
</dbReference>
<dbReference type="SUPFAM" id="SSF53067">
    <property type="entry name" value="Actin-like ATPase domain"/>
    <property type="match status" value="2"/>
</dbReference>
<dbReference type="PROSITE" id="PS01075">
    <property type="entry name" value="ACETATE_KINASE_1"/>
    <property type="match status" value="1"/>
</dbReference>
<dbReference type="PROSITE" id="PS01076">
    <property type="entry name" value="ACETATE_KINASE_2"/>
    <property type="match status" value="1"/>
</dbReference>
<feature type="chain" id="PRO_1000116808" description="Acetate kinase">
    <location>
        <begin position="1"/>
        <end position="398"/>
    </location>
</feature>
<feature type="active site" description="Proton donor/acceptor" evidence="1">
    <location>
        <position position="147"/>
    </location>
</feature>
<feature type="binding site" evidence="1">
    <location>
        <position position="9"/>
    </location>
    <ligand>
        <name>Mg(2+)</name>
        <dbReference type="ChEBI" id="CHEBI:18420"/>
    </ligand>
</feature>
<feature type="binding site" evidence="1">
    <location>
        <position position="16"/>
    </location>
    <ligand>
        <name>ATP</name>
        <dbReference type="ChEBI" id="CHEBI:30616"/>
    </ligand>
</feature>
<feature type="binding site" evidence="1">
    <location>
        <position position="90"/>
    </location>
    <ligand>
        <name>substrate</name>
    </ligand>
</feature>
<feature type="binding site" evidence="1">
    <location>
        <begin position="207"/>
        <end position="211"/>
    </location>
    <ligand>
        <name>ATP</name>
        <dbReference type="ChEBI" id="CHEBI:30616"/>
    </ligand>
</feature>
<feature type="binding site" evidence="1">
    <location>
        <begin position="282"/>
        <end position="284"/>
    </location>
    <ligand>
        <name>ATP</name>
        <dbReference type="ChEBI" id="CHEBI:30616"/>
    </ligand>
</feature>
<feature type="binding site" evidence="1">
    <location>
        <begin position="330"/>
        <end position="334"/>
    </location>
    <ligand>
        <name>ATP</name>
        <dbReference type="ChEBI" id="CHEBI:30616"/>
    </ligand>
</feature>
<feature type="binding site" evidence="1">
    <location>
        <position position="384"/>
    </location>
    <ligand>
        <name>Mg(2+)</name>
        <dbReference type="ChEBI" id="CHEBI:18420"/>
    </ligand>
</feature>
<feature type="site" description="Transition state stabilizer" evidence="1">
    <location>
        <position position="179"/>
    </location>
</feature>
<feature type="site" description="Transition state stabilizer" evidence="1">
    <location>
        <position position="240"/>
    </location>
</feature>
<comment type="function">
    <text evidence="1">Catalyzes the formation of acetyl phosphate from acetate and ATP. Can also catalyze the reverse reaction.</text>
</comment>
<comment type="catalytic activity">
    <reaction evidence="1">
        <text>acetate + ATP = acetyl phosphate + ADP</text>
        <dbReference type="Rhea" id="RHEA:11352"/>
        <dbReference type="ChEBI" id="CHEBI:22191"/>
        <dbReference type="ChEBI" id="CHEBI:30089"/>
        <dbReference type="ChEBI" id="CHEBI:30616"/>
        <dbReference type="ChEBI" id="CHEBI:456216"/>
        <dbReference type="EC" id="2.7.2.1"/>
    </reaction>
</comment>
<comment type="cofactor">
    <cofactor evidence="1">
        <name>Mg(2+)</name>
        <dbReference type="ChEBI" id="CHEBI:18420"/>
    </cofactor>
    <cofactor evidence="1">
        <name>Mn(2+)</name>
        <dbReference type="ChEBI" id="CHEBI:29035"/>
    </cofactor>
    <text evidence="1">Mg(2+). Can also accept Mn(2+).</text>
</comment>
<comment type="pathway">
    <text evidence="1">Metabolic intermediate biosynthesis; acetyl-CoA biosynthesis; acetyl-CoA from acetate: step 1/2.</text>
</comment>
<comment type="subunit">
    <text evidence="1">Homodimer.</text>
</comment>
<comment type="subcellular location">
    <subcellularLocation>
        <location evidence="1">Cytoplasm</location>
    </subcellularLocation>
</comment>
<comment type="similarity">
    <text evidence="1">Belongs to the acetokinase family.</text>
</comment>
<name>ACKA_STACT</name>
<reference key="1">
    <citation type="journal article" date="2009" name="Appl. Environ. Microbiol.">
        <title>Genome analysis of the meat starter culture bacterium Staphylococcus carnosus TM300.</title>
        <authorList>
            <person name="Rosenstein R."/>
            <person name="Nerz C."/>
            <person name="Biswas L."/>
            <person name="Resch A."/>
            <person name="Raddatz G."/>
            <person name="Schuster S.C."/>
            <person name="Goetz F."/>
        </authorList>
    </citation>
    <scope>NUCLEOTIDE SEQUENCE [LARGE SCALE GENOMIC DNA]</scope>
    <source>
        <strain>TM300</strain>
    </source>
</reference>
<organism>
    <name type="scientific">Staphylococcus carnosus (strain TM300)</name>
    <dbReference type="NCBI Taxonomy" id="396513"/>
    <lineage>
        <taxon>Bacteria</taxon>
        <taxon>Bacillati</taxon>
        <taxon>Bacillota</taxon>
        <taxon>Bacilli</taxon>
        <taxon>Bacillales</taxon>
        <taxon>Staphylococcaceae</taxon>
        <taxon>Staphylococcus</taxon>
    </lineage>
</organism>
<evidence type="ECO:0000255" key="1">
    <source>
        <dbReference type="HAMAP-Rule" id="MF_00020"/>
    </source>
</evidence>
<keyword id="KW-0067">ATP-binding</keyword>
<keyword id="KW-0963">Cytoplasm</keyword>
<keyword id="KW-0418">Kinase</keyword>
<keyword id="KW-0460">Magnesium</keyword>
<keyword id="KW-0479">Metal-binding</keyword>
<keyword id="KW-0547">Nucleotide-binding</keyword>
<keyword id="KW-1185">Reference proteome</keyword>
<keyword id="KW-0808">Transferase</keyword>
<sequence length="398" mass="43561">MSNLVLAINAGSSSLKFQLIEIPEEKLVSKGLIERIGLKGSKITVEYDGRKFTDEKEINDHVQAVNIMLDNLIDLGIIRDINDIDGTGHRVVHGGELFPESALVTNNVEKQIESLTELAPLHNPANLMGIRAFRKLLPGIPHVAVFDTSFHQTMPEQAYLYSLPFHYYKDYGIRKYGFHGTSHKYVSQRAAEILGKPIEELRIISCHIGNGASIAAIDGGESVDTSMGFTPLAGVTMGTRSGDIDPALIPYIMEKTGKSAEAVLDILNKESGLLGISGTSSDLRDLEQDAEEGKTRAQLALDVFASRIHKYIGSYAAKMHGVDVVIFTAGVGENSDEVRARVLEGLEFMGVYWDPKKNSQLHGTEGFINYPHSPVKVIVIPTNEEVMIARDAVKFGSL</sequence>
<accession>B9DN93</accession>
<protein>
    <recommendedName>
        <fullName evidence="1">Acetate kinase</fullName>
        <ecNumber evidence="1">2.7.2.1</ecNumber>
    </recommendedName>
    <alternativeName>
        <fullName evidence="1">Acetokinase</fullName>
    </alternativeName>
</protein>